<evidence type="ECO:0000255" key="1">
    <source>
        <dbReference type="HAMAP-Rule" id="MF_00420"/>
    </source>
</evidence>
<proteinExistence type="inferred from homology"/>
<dbReference type="EC" id="6.3.5.3" evidence="1"/>
<dbReference type="EMBL" id="CP000350">
    <property type="protein sequence ID" value="ABJ76746.1"/>
    <property type="molecule type" value="Genomic_DNA"/>
</dbReference>
<dbReference type="RefSeq" id="WP_011669693.1">
    <property type="nucleotide sequence ID" value="NC_008510.1"/>
</dbReference>
<dbReference type="SMR" id="Q04QS4"/>
<dbReference type="KEGG" id="lbj:LBJ_2272"/>
<dbReference type="HOGENOM" id="CLU_003100_0_1_12"/>
<dbReference type="UniPathway" id="UPA00074">
    <property type="reaction ID" value="UER00128"/>
</dbReference>
<dbReference type="Proteomes" id="UP000000656">
    <property type="component" value="Chromosome 1"/>
</dbReference>
<dbReference type="GO" id="GO:0005737">
    <property type="term" value="C:cytoplasm"/>
    <property type="evidence" value="ECO:0007669"/>
    <property type="project" value="UniProtKB-SubCell"/>
</dbReference>
<dbReference type="GO" id="GO:0005524">
    <property type="term" value="F:ATP binding"/>
    <property type="evidence" value="ECO:0007669"/>
    <property type="project" value="UniProtKB-UniRule"/>
</dbReference>
<dbReference type="GO" id="GO:0000287">
    <property type="term" value="F:magnesium ion binding"/>
    <property type="evidence" value="ECO:0007669"/>
    <property type="project" value="UniProtKB-UniRule"/>
</dbReference>
<dbReference type="GO" id="GO:0004642">
    <property type="term" value="F:phosphoribosylformylglycinamidine synthase activity"/>
    <property type="evidence" value="ECO:0007669"/>
    <property type="project" value="UniProtKB-UniRule"/>
</dbReference>
<dbReference type="GO" id="GO:0006189">
    <property type="term" value="P:'de novo' IMP biosynthetic process"/>
    <property type="evidence" value="ECO:0007669"/>
    <property type="project" value="UniProtKB-UniRule"/>
</dbReference>
<dbReference type="CDD" id="cd02203">
    <property type="entry name" value="PurL_repeat1"/>
    <property type="match status" value="1"/>
</dbReference>
<dbReference type="CDD" id="cd02204">
    <property type="entry name" value="PurL_repeat2"/>
    <property type="match status" value="1"/>
</dbReference>
<dbReference type="FunFam" id="3.30.1330.10:FF:000004">
    <property type="entry name" value="Phosphoribosylformylglycinamidine synthase subunit PurL"/>
    <property type="match status" value="1"/>
</dbReference>
<dbReference type="Gene3D" id="3.90.650.10">
    <property type="entry name" value="PurM-like C-terminal domain"/>
    <property type="match status" value="2"/>
</dbReference>
<dbReference type="Gene3D" id="3.30.1330.10">
    <property type="entry name" value="PurM-like, N-terminal domain"/>
    <property type="match status" value="2"/>
</dbReference>
<dbReference type="HAMAP" id="MF_00420">
    <property type="entry name" value="PurL_2"/>
    <property type="match status" value="1"/>
</dbReference>
<dbReference type="InterPro" id="IPR010074">
    <property type="entry name" value="PRibForGlyAmidine_synth_PurL"/>
</dbReference>
<dbReference type="InterPro" id="IPR041609">
    <property type="entry name" value="PurL_linker"/>
</dbReference>
<dbReference type="InterPro" id="IPR010918">
    <property type="entry name" value="PurM-like_C_dom"/>
</dbReference>
<dbReference type="InterPro" id="IPR036676">
    <property type="entry name" value="PurM-like_C_sf"/>
</dbReference>
<dbReference type="InterPro" id="IPR016188">
    <property type="entry name" value="PurM-like_N"/>
</dbReference>
<dbReference type="InterPro" id="IPR036921">
    <property type="entry name" value="PurM-like_N_sf"/>
</dbReference>
<dbReference type="NCBIfam" id="TIGR01736">
    <property type="entry name" value="FGAM_synth_II"/>
    <property type="match status" value="1"/>
</dbReference>
<dbReference type="NCBIfam" id="NF002290">
    <property type="entry name" value="PRK01213.1"/>
    <property type="match status" value="1"/>
</dbReference>
<dbReference type="PANTHER" id="PTHR43555">
    <property type="entry name" value="PHOSPHORIBOSYLFORMYLGLYCINAMIDINE SYNTHASE SUBUNIT PURL"/>
    <property type="match status" value="1"/>
</dbReference>
<dbReference type="PANTHER" id="PTHR43555:SF1">
    <property type="entry name" value="PHOSPHORIBOSYLFORMYLGLYCINAMIDINE SYNTHASE SUBUNIT PURL"/>
    <property type="match status" value="1"/>
</dbReference>
<dbReference type="Pfam" id="PF00586">
    <property type="entry name" value="AIRS"/>
    <property type="match status" value="2"/>
</dbReference>
<dbReference type="Pfam" id="PF02769">
    <property type="entry name" value="AIRS_C"/>
    <property type="match status" value="2"/>
</dbReference>
<dbReference type="Pfam" id="PF18072">
    <property type="entry name" value="FGAR-AT_linker"/>
    <property type="match status" value="1"/>
</dbReference>
<dbReference type="PIRSF" id="PIRSF001587">
    <property type="entry name" value="FGAM_synthase_II"/>
    <property type="match status" value="1"/>
</dbReference>
<dbReference type="SUPFAM" id="SSF56042">
    <property type="entry name" value="PurM C-terminal domain-like"/>
    <property type="match status" value="2"/>
</dbReference>
<dbReference type="SUPFAM" id="SSF55326">
    <property type="entry name" value="PurM N-terminal domain-like"/>
    <property type="match status" value="2"/>
</dbReference>
<name>PURL_LEPBJ</name>
<comment type="function">
    <text evidence="1">Part of the phosphoribosylformylglycinamidine synthase complex involved in the purines biosynthetic pathway. Catalyzes the ATP-dependent conversion of formylglycinamide ribonucleotide (FGAR) and glutamine to yield formylglycinamidine ribonucleotide (FGAM) and glutamate. The FGAM synthase complex is composed of three subunits. PurQ produces an ammonia molecule by converting glutamine to glutamate. PurL transfers the ammonia molecule to FGAR to form FGAM in an ATP-dependent manner. PurS interacts with PurQ and PurL and is thought to assist in the transfer of the ammonia molecule from PurQ to PurL.</text>
</comment>
<comment type="catalytic activity">
    <reaction evidence="1">
        <text>N(2)-formyl-N(1)-(5-phospho-beta-D-ribosyl)glycinamide + L-glutamine + ATP + H2O = 2-formamido-N(1)-(5-O-phospho-beta-D-ribosyl)acetamidine + L-glutamate + ADP + phosphate + H(+)</text>
        <dbReference type="Rhea" id="RHEA:17129"/>
        <dbReference type="ChEBI" id="CHEBI:15377"/>
        <dbReference type="ChEBI" id="CHEBI:15378"/>
        <dbReference type="ChEBI" id="CHEBI:29985"/>
        <dbReference type="ChEBI" id="CHEBI:30616"/>
        <dbReference type="ChEBI" id="CHEBI:43474"/>
        <dbReference type="ChEBI" id="CHEBI:58359"/>
        <dbReference type="ChEBI" id="CHEBI:147286"/>
        <dbReference type="ChEBI" id="CHEBI:147287"/>
        <dbReference type="ChEBI" id="CHEBI:456216"/>
        <dbReference type="EC" id="6.3.5.3"/>
    </reaction>
</comment>
<comment type="pathway">
    <text evidence="1">Purine metabolism; IMP biosynthesis via de novo pathway; 5-amino-1-(5-phospho-D-ribosyl)imidazole from N(2)-formyl-N(1)-(5-phospho-D-ribosyl)glycinamide: step 1/2.</text>
</comment>
<comment type="subunit">
    <text evidence="1">Monomer. Part of the FGAM synthase complex composed of 1 PurL, 1 PurQ and 2 PurS subunits.</text>
</comment>
<comment type="subcellular location">
    <subcellularLocation>
        <location evidence="1">Cytoplasm</location>
    </subcellularLocation>
</comment>
<comment type="similarity">
    <text evidence="1">Belongs to the FGAMS family.</text>
</comment>
<accession>Q04QS4</accession>
<feature type="chain" id="PRO_1000050316" description="Phosphoribosylformylglycinamidine synthase subunit PurL">
    <location>
        <begin position="1"/>
        <end position="745"/>
    </location>
</feature>
<feature type="active site" evidence="1">
    <location>
        <position position="47"/>
    </location>
</feature>
<feature type="active site" description="Proton acceptor" evidence="1">
    <location>
        <position position="94"/>
    </location>
</feature>
<feature type="binding site" evidence="1">
    <location>
        <position position="50"/>
    </location>
    <ligand>
        <name>ATP</name>
        <dbReference type="ChEBI" id="CHEBI:30616"/>
    </ligand>
</feature>
<feature type="binding site" evidence="1">
    <location>
        <position position="90"/>
    </location>
    <ligand>
        <name>ATP</name>
        <dbReference type="ChEBI" id="CHEBI:30616"/>
    </ligand>
</feature>
<feature type="binding site" evidence="1">
    <location>
        <position position="92"/>
    </location>
    <ligand>
        <name>Mg(2+)</name>
        <dbReference type="ChEBI" id="CHEBI:18420"/>
        <label>1</label>
    </ligand>
</feature>
<feature type="binding site" evidence="1">
    <location>
        <begin position="93"/>
        <end position="96"/>
    </location>
    <ligand>
        <name>substrate</name>
    </ligand>
</feature>
<feature type="binding site" evidence="1">
    <location>
        <position position="115"/>
    </location>
    <ligand>
        <name>substrate</name>
    </ligand>
</feature>
<feature type="binding site" evidence="1">
    <location>
        <position position="116"/>
    </location>
    <ligand>
        <name>Mg(2+)</name>
        <dbReference type="ChEBI" id="CHEBI:18420"/>
        <label>2</label>
    </ligand>
</feature>
<feature type="binding site" evidence="1">
    <location>
        <position position="240"/>
    </location>
    <ligand>
        <name>substrate</name>
    </ligand>
</feature>
<feature type="binding site" evidence="1">
    <location>
        <position position="268"/>
    </location>
    <ligand>
        <name>Mg(2+)</name>
        <dbReference type="ChEBI" id="CHEBI:18420"/>
        <label>2</label>
    </ligand>
</feature>
<feature type="binding site" evidence="1">
    <location>
        <begin position="312"/>
        <end position="314"/>
    </location>
    <ligand>
        <name>substrate</name>
    </ligand>
</feature>
<feature type="binding site" evidence="1">
    <location>
        <position position="501"/>
    </location>
    <ligand>
        <name>ATP</name>
        <dbReference type="ChEBI" id="CHEBI:30616"/>
    </ligand>
</feature>
<feature type="binding site" evidence="1">
    <location>
        <position position="538"/>
    </location>
    <ligand>
        <name>ATP</name>
        <dbReference type="ChEBI" id="CHEBI:30616"/>
    </ligand>
</feature>
<feature type="binding site" evidence="1">
    <location>
        <position position="539"/>
    </location>
    <ligand>
        <name>Mg(2+)</name>
        <dbReference type="ChEBI" id="CHEBI:18420"/>
        <label>1</label>
    </ligand>
</feature>
<feature type="binding site" evidence="1">
    <location>
        <position position="541"/>
    </location>
    <ligand>
        <name>substrate</name>
    </ligand>
</feature>
<reference key="1">
    <citation type="journal article" date="2006" name="Proc. Natl. Acad. Sci. U.S.A.">
        <title>Genome reduction in Leptospira borgpetersenii reflects limited transmission potential.</title>
        <authorList>
            <person name="Bulach D.M."/>
            <person name="Zuerner R.L."/>
            <person name="Wilson P."/>
            <person name="Seemann T."/>
            <person name="McGrath A."/>
            <person name="Cullen P.A."/>
            <person name="Davis J."/>
            <person name="Johnson M."/>
            <person name="Kuczek E."/>
            <person name="Alt D.P."/>
            <person name="Peterson-Burch B."/>
            <person name="Coppel R.L."/>
            <person name="Rood J.I."/>
            <person name="Davies J.K."/>
            <person name="Adler B."/>
        </authorList>
    </citation>
    <scope>NUCLEOTIDE SEQUENCE [LARGE SCALE GENOMIC DNA]</scope>
    <source>
        <strain>JB197</strain>
    </source>
</reference>
<protein>
    <recommendedName>
        <fullName evidence="1">Phosphoribosylformylglycinamidine synthase subunit PurL</fullName>
        <shortName evidence="1">FGAM synthase</shortName>
        <ecNumber evidence="1">6.3.5.3</ecNumber>
    </recommendedName>
    <alternativeName>
        <fullName evidence="1">Formylglycinamide ribonucleotide amidotransferase subunit II</fullName>
        <shortName evidence="1">FGAR amidotransferase II</shortName>
        <shortName evidence="1">FGAR-AT II</shortName>
    </alternativeName>
    <alternativeName>
        <fullName evidence="1">Glutamine amidotransferase PurL</fullName>
    </alternativeName>
    <alternativeName>
        <fullName evidence="1">Phosphoribosylformylglycinamidine synthase subunit II</fullName>
    </alternativeName>
</protein>
<sequence>MEKDVVSLQDALEHGLTAEEFQKIQEILGRIPNSTELGIFSAMWSEHCSYKNSVLKLKTLPTSSDKLLAKAGEENAGAMDIGDGLAVVFKIESHNHPTAVEPYQGAATGVGGIMRDIFTMGARPIVSLNSLRFGNPDEPRNKYLLSRAVKGIGDYGNSLGIAVSGGELFIDECFSKNPLVNAMTVGIVRHDQMASATTGGQVGNAVYIVGATTGRDGIHGASFASKDLSKESESKRSAVQVGDPFMEKLLMEASLEAIQKGLLIGIQDMGAAGISCATSEMSAKGKTGMKIDLDLVPFRETGMNAYEVMLSESQERMLVVPKKGKESELVSIFEKWNLNAVRIGEVTADGFIEIYMGGKLKAHIPAESLVLGGGAPRYERETKRPSYLDAVKTWKPNSILDITPGANTKDVLLNILSSWNVCSRKPITEQYDSEVGLVKLIGPGLDGGLSSIPDTNKALATATDCNSRYTYLDPYKGAQFAVCEAARNVYVTGATPYGVTNNLNFANPYIPENYYMFSECIRGMGDACRFLGLPVTGGNVSFYNESPEGPIFPTPTIGMVGILQDKKKFLSNFPKEVGIELAVLGNFRPSLGGSEYLKKIHGQVNGSIPEIDIKEELELCKLILSLNEKGALKSARDLSLGGIGIALSKTILFSGLGIDAELIAFKQSRLDLTLFGESSTTVLVGFDSSWKEKIREQTEEKGLKFYPVGKTTSSELLKLKDIGVEVSFSELNGPYEKGLEVVFAL</sequence>
<keyword id="KW-0067">ATP-binding</keyword>
<keyword id="KW-0963">Cytoplasm</keyword>
<keyword id="KW-0436">Ligase</keyword>
<keyword id="KW-0460">Magnesium</keyword>
<keyword id="KW-0479">Metal-binding</keyword>
<keyword id="KW-0547">Nucleotide-binding</keyword>
<keyword id="KW-0658">Purine biosynthesis</keyword>
<organism>
    <name type="scientific">Leptospira borgpetersenii serovar Hardjo-bovis (strain JB197)</name>
    <dbReference type="NCBI Taxonomy" id="355277"/>
    <lineage>
        <taxon>Bacteria</taxon>
        <taxon>Pseudomonadati</taxon>
        <taxon>Spirochaetota</taxon>
        <taxon>Spirochaetia</taxon>
        <taxon>Leptospirales</taxon>
        <taxon>Leptospiraceae</taxon>
        <taxon>Leptospira</taxon>
    </lineage>
</organism>
<gene>
    <name evidence="1" type="primary">purL</name>
    <name type="ordered locus">LBJ_2272</name>
</gene>